<organism>
    <name type="scientific">Oryza sativa subsp. indica</name>
    <name type="common">Rice</name>
    <dbReference type="NCBI Taxonomy" id="39946"/>
    <lineage>
        <taxon>Eukaryota</taxon>
        <taxon>Viridiplantae</taxon>
        <taxon>Streptophyta</taxon>
        <taxon>Embryophyta</taxon>
        <taxon>Tracheophyta</taxon>
        <taxon>Spermatophyta</taxon>
        <taxon>Magnoliopsida</taxon>
        <taxon>Liliopsida</taxon>
        <taxon>Poales</taxon>
        <taxon>Poaceae</taxon>
        <taxon>BOP clade</taxon>
        <taxon>Oryzoideae</taxon>
        <taxon>Oryzeae</taxon>
        <taxon>Oryzinae</taxon>
        <taxon>Oryza</taxon>
        <taxon>Oryza sativa</taxon>
    </lineage>
</organism>
<dbReference type="EC" id="2.1.1.-"/>
<dbReference type="EMBL" id="AL732349">
    <property type="protein sequence ID" value="CAJ86228.1"/>
    <property type="molecule type" value="Genomic_DNA"/>
</dbReference>
<dbReference type="EMBL" id="CM000129">
    <property type="protein sequence ID" value="EAY96048.1"/>
    <property type="molecule type" value="Genomic_DNA"/>
</dbReference>
<dbReference type="SMR" id="A2XYY8"/>
<dbReference type="STRING" id="39946.A2XYY8"/>
<dbReference type="EnsemblPlants" id="BGIOSGA017350-TA">
    <property type="protein sequence ID" value="BGIOSGA017350-PA"/>
    <property type="gene ID" value="BGIOSGA017350"/>
</dbReference>
<dbReference type="Gramene" id="BGIOSGA017350-TA">
    <property type="protein sequence ID" value="BGIOSGA017350-PA"/>
    <property type="gene ID" value="BGIOSGA017350"/>
</dbReference>
<dbReference type="HOGENOM" id="CLU_017375_1_2_1"/>
<dbReference type="OMA" id="FWNNVEG"/>
<dbReference type="Proteomes" id="UP000007015">
    <property type="component" value="Chromosome 4"/>
</dbReference>
<dbReference type="GO" id="GO:0042054">
    <property type="term" value="F:histone methyltransferase activity"/>
    <property type="evidence" value="ECO:0007669"/>
    <property type="project" value="TreeGrafter"/>
</dbReference>
<dbReference type="GO" id="GO:0016274">
    <property type="term" value="F:protein-arginine N-methyltransferase activity"/>
    <property type="evidence" value="ECO:0007669"/>
    <property type="project" value="InterPro"/>
</dbReference>
<dbReference type="GO" id="GO:0032259">
    <property type="term" value="P:methylation"/>
    <property type="evidence" value="ECO:0007669"/>
    <property type="project" value="UniProtKB-KW"/>
</dbReference>
<dbReference type="CDD" id="cd02440">
    <property type="entry name" value="AdoMet_MTases"/>
    <property type="match status" value="1"/>
</dbReference>
<dbReference type="FunFam" id="2.70.160.11:FF:000008">
    <property type="entry name" value="Protein arginine N-methyltransferase 6"/>
    <property type="match status" value="1"/>
</dbReference>
<dbReference type="FunFam" id="3.40.50.150:FF:000016">
    <property type="entry name" value="Protein arginine N-methyltransferase 6"/>
    <property type="match status" value="1"/>
</dbReference>
<dbReference type="Gene3D" id="2.70.160.11">
    <property type="entry name" value="Hnrnp arginine n-methyltransferase1"/>
    <property type="match status" value="1"/>
</dbReference>
<dbReference type="Gene3D" id="3.40.50.150">
    <property type="entry name" value="Vaccinia Virus protein VP39"/>
    <property type="match status" value="1"/>
</dbReference>
<dbReference type="InterPro" id="IPR025799">
    <property type="entry name" value="Arg_MeTrfase"/>
</dbReference>
<dbReference type="InterPro" id="IPR041698">
    <property type="entry name" value="Methyltransf_25"/>
</dbReference>
<dbReference type="InterPro" id="IPR055135">
    <property type="entry name" value="PRMT_dom"/>
</dbReference>
<dbReference type="InterPro" id="IPR029063">
    <property type="entry name" value="SAM-dependent_MTases_sf"/>
</dbReference>
<dbReference type="PANTHER" id="PTHR11006">
    <property type="entry name" value="PROTEIN ARGININE N-METHYLTRANSFERASE"/>
    <property type="match status" value="1"/>
</dbReference>
<dbReference type="PANTHER" id="PTHR11006:SF70">
    <property type="entry name" value="PROTEIN ARGININE N-METHYLTRANSFERASE 6.1-RELATED"/>
    <property type="match status" value="1"/>
</dbReference>
<dbReference type="Pfam" id="PF13649">
    <property type="entry name" value="Methyltransf_25"/>
    <property type="match status" value="1"/>
</dbReference>
<dbReference type="Pfam" id="PF22528">
    <property type="entry name" value="PRMT_C"/>
    <property type="match status" value="2"/>
</dbReference>
<dbReference type="SUPFAM" id="SSF53335">
    <property type="entry name" value="S-adenosyl-L-methionine-dependent methyltransferases"/>
    <property type="match status" value="1"/>
</dbReference>
<dbReference type="PROSITE" id="PS51678">
    <property type="entry name" value="SAM_MT_PRMT"/>
    <property type="match status" value="1"/>
</dbReference>
<proteinExistence type="inferred from homology"/>
<evidence type="ECO:0000250" key="1"/>
<evidence type="ECO:0000255" key="2">
    <source>
        <dbReference type="PROSITE-ProRule" id="PRU01015"/>
    </source>
</evidence>
<evidence type="ECO:0000256" key="3">
    <source>
        <dbReference type="SAM" id="MobiDB-lite"/>
    </source>
</evidence>
<gene>
    <name type="primary">PRMT6.1</name>
    <name type="ORF">H0402C08.4</name>
    <name type="ORF">OsI_017281</name>
</gene>
<accession>A2XYY8</accession>
<accession>Q259J4</accession>
<feature type="chain" id="PRO_0000293997" description="Probable protein arginine N-methyltransferase 6.1">
    <location>
        <begin position="1"/>
        <end position="379"/>
    </location>
</feature>
<feature type="domain" description="SAM-dependent MTase PRMT-type" evidence="2">
    <location>
        <begin position="45"/>
        <end position="379"/>
    </location>
</feature>
<feature type="region of interest" description="Disordered" evidence="3">
    <location>
        <begin position="1"/>
        <end position="35"/>
    </location>
</feature>
<feature type="compositionally biased region" description="Low complexity" evidence="3">
    <location>
        <begin position="19"/>
        <end position="35"/>
    </location>
</feature>
<feature type="active site" evidence="1">
    <location>
        <position position="156"/>
    </location>
</feature>
<feature type="active site" evidence="1">
    <location>
        <position position="165"/>
    </location>
</feature>
<feature type="binding site" evidence="1">
    <location>
        <position position="58"/>
    </location>
    <ligand>
        <name>S-adenosyl-L-methionine</name>
        <dbReference type="ChEBI" id="CHEBI:59789"/>
    </ligand>
</feature>
<feature type="binding site" evidence="1">
    <location>
        <position position="67"/>
    </location>
    <ligand>
        <name>S-adenosyl-L-methionine</name>
        <dbReference type="ChEBI" id="CHEBI:59789"/>
    </ligand>
</feature>
<feature type="binding site" evidence="1">
    <location>
        <position position="91"/>
    </location>
    <ligand>
        <name>S-adenosyl-L-methionine</name>
        <dbReference type="ChEBI" id="CHEBI:59789"/>
    </ligand>
</feature>
<feature type="binding site" evidence="1">
    <location>
        <position position="113"/>
    </location>
    <ligand>
        <name>S-adenosyl-L-methionine</name>
        <dbReference type="ChEBI" id="CHEBI:59789"/>
    </ligand>
</feature>
<feature type="binding site" evidence="1">
    <location>
        <position position="142"/>
    </location>
    <ligand>
        <name>S-adenosyl-L-methionine</name>
        <dbReference type="ChEBI" id="CHEBI:59789"/>
    </ligand>
</feature>
<sequence>MLPSHLNGHSPLARRRPRLSAASPPATGDSDAAAAAADAPLAEHDRIYFQSYSHIGIHEAMIKDRVRTDAYRSAIMHHQKFIEGKVVMDVGCGTGILSVFCARAGAKCVYAVEASEMATQAREIVKANNLDDKVVVVHGRVEDVEVEDKVDVIISEWMGYMLLYESMLPSVLFARDKWLKPGGLILPSHATLFMAPITNSERYEGSVDFWSDVYGINMSALVPLAKKFTSEEPSIEIIGGENVLSWPFVVKHIDCYTFKAEELKSITTKYKVSSMMLAPIHGFGLWFEVEFNGPSNPTDKSPSDLNPLDVIRTKRRRGSEDPVVLSTAPEDEPTHWHQTILYFPDPIEVKQDQIIEGSVKVSQSEENPRFLNIQLDCTM</sequence>
<comment type="function">
    <text evidence="1">Arginine methyltransferase that can both catalyze the formation of omega-N monomethylarginine (MMA) and asymmetrical dimethylarginine (aDMA).</text>
</comment>
<comment type="similarity">
    <text evidence="2">Belongs to the class I-like SAM-binding methyltransferase superfamily. Protein arginine N-methyltransferase family. PRMT6 subfamily.</text>
</comment>
<reference key="1">
    <citation type="journal article" date="2002" name="Nature">
        <title>Sequence and analysis of rice chromosome 4.</title>
        <authorList>
            <person name="Feng Q."/>
            <person name="Zhang Y."/>
            <person name="Hao P."/>
            <person name="Wang S."/>
            <person name="Fu G."/>
            <person name="Huang Y."/>
            <person name="Li Y."/>
            <person name="Zhu J."/>
            <person name="Liu Y."/>
            <person name="Hu X."/>
            <person name="Jia P."/>
            <person name="Zhang Y."/>
            <person name="Zhao Q."/>
            <person name="Ying K."/>
            <person name="Yu S."/>
            <person name="Tang Y."/>
            <person name="Weng Q."/>
            <person name="Zhang L."/>
            <person name="Lu Y."/>
            <person name="Mu J."/>
            <person name="Lu Y."/>
            <person name="Zhang L.S."/>
            <person name="Yu Z."/>
            <person name="Fan D."/>
            <person name="Liu X."/>
            <person name="Lu T."/>
            <person name="Li C."/>
            <person name="Wu Y."/>
            <person name="Sun T."/>
            <person name="Lei H."/>
            <person name="Li T."/>
            <person name="Hu H."/>
            <person name="Guan J."/>
            <person name="Wu M."/>
            <person name="Zhang R."/>
            <person name="Zhou B."/>
            <person name="Chen Z."/>
            <person name="Chen L."/>
            <person name="Jin Z."/>
            <person name="Wang R."/>
            <person name="Yin H."/>
            <person name="Cai Z."/>
            <person name="Ren S."/>
            <person name="Lv G."/>
            <person name="Gu W."/>
            <person name="Zhu G."/>
            <person name="Tu Y."/>
            <person name="Jia J."/>
            <person name="Zhang Y."/>
            <person name="Chen J."/>
            <person name="Kang H."/>
            <person name="Chen X."/>
            <person name="Shao C."/>
            <person name="Sun Y."/>
            <person name="Hu Q."/>
            <person name="Zhang X."/>
            <person name="Zhang W."/>
            <person name="Wang L."/>
            <person name="Ding C."/>
            <person name="Sheng H."/>
            <person name="Gu J."/>
            <person name="Chen S."/>
            <person name="Ni L."/>
            <person name="Zhu F."/>
            <person name="Chen W."/>
            <person name="Lan L."/>
            <person name="Lai Y."/>
            <person name="Cheng Z."/>
            <person name="Gu M."/>
            <person name="Jiang J."/>
            <person name="Li J."/>
            <person name="Hong G."/>
            <person name="Xue Y."/>
            <person name="Han B."/>
        </authorList>
    </citation>
    <scope>NUCLEOTIDE SEQUENCE [LARGE SCALE GENOMIC DNA]</scope>
    <source>
        <strain>cv. Guang-Lu-Ai No.4</strain>
    </source>
</reference>
<reference key="2">
    <citation type="journal article" date="2005" name="PLoS Biol.">
        <title>The genomes of Oryza sativa: a history of duplications.</title>
        <authorList>
            <person name="Yu J."/>
            <person name="Wang J."/>
            <person name="Lin W."/>
            <person name="Li S."/>
            <person name="Li H."/>
            <person name="Zhou J."/>
            <person name="Ni P."/>
            <person name="Dong W."/>
            <person name="Hu S."/>
            <person name="Zeng C."/>
            <person name="Zhang J."/>
            <person name="Zhang Y."/>
            <person name="Li R."/>
            <person name="Xu Z."/>
            <person name="Li S."/>
            <person name="Li X."/>
            <person name="Zheng H."/>
            <person name="Cong L."/>
            <person name="Lin L."/>
            <person name="Yin J."/>
            <person name="Geng J."/>
            <person name="Li G."/>
            <person name="Shi J."/>
            <person name="Liu J."/>
            <person name="Lv H."/>
            <person name="Li J."/>
            <person name="Wang J."/>
            <person name="Deng Y."/>
            <person name="Ran L."/>
            <person name="Shi X."/>
            <person name="Wang X."/>
            <person name="Wu Q."/>
            <person name="Li C."/>
            <person name="Ren X."/>
            <person name="Wang J."/>
            <person name="Wang X."/>
            <person name="Li D."/>
            <person name="Liu D."/>
            <person name="Zhang X."/>
            <person name="Ji Z."/>
            <person name="Zhao W."/>
            <person name="Sun Y."/>
            <person name="Zhang Z."/>
            <person name="Bao J."/>
            <person name="Han Y."/>
            <person name="Dong L."/>
            <person name="Ji J."/>
            <person name="Chen P."/>
            <person name="Wu S."/>
            <person name="Liu J."/>
            <person name="Xiao Y."/>
            <person name="Bu D."/>
            <person name="Tan J."/>
            <person name="Yang L."/>
            <person name="Ye C."/>
            <person name="Zhang J."/>
            <person name="Xu J."/>
            <person name="Zhou Y."/>
            <person name="Yu Y."/>
            <person name="Zhang B."/>
            <person name="Zhuang S."/>
            <person name="Wei H."/>
            <person name="Liu B."/>
            <person name="Lei M."/>
            <person name="Yu H."/>
            <person name="Li Y."/>
            <person name="Xu H."/>
            <person name="Wei S."/>
            <person name="He X."/>
            <person name="Fang L."/>
            <person name="Zhang Z."/>
            <person name="Zhang Y."/>
            <person name="Huang X."/>
            <person name="Su Z."/>
            <person name="Tong W."/>
            <person name="Li J."/>
            <person name="Tong Z."/>
            <person name="Li S."/>
            <person name="Ye J."/>
            <person name="Wang L."/>
            <person name="Fang L."/>
            <person name="Lei T."/>
            <person name="Chen C.-S."/>
            <person name="Chen H.-C."/>
            <person name="Xu Z."/>
            <person name="Li H."/>
            <person name="Huang H."/>
            <person name="Zhang F."/>
            <person name="Xu H."/>
            <person name="Li N."/>
            <person name="Zhao C."/>
            <person name="Li S."/>
            <person name="Dong L."/>
            <person name="Huang Y."/>
            <person name="Li L."/>
            <person name="Xi Y."/>
            <person name="Qi Q."/>
            <person name="Li W."/>
            <person name="Zhang B."/>
            <person name="Hu W."/>
            <person name="Zhang Y."/>
            <person name="Tian X."/>
            <person name="Jiao Y."/>
            <person name="Liang X."/>
            <person name="Jin J."/>
            <person name="Gao L."/>
            <person name="Zheng W."/>
            <person name="Hao B."/>
            <person name="Liu S.-M."/>
            <person name="Wang W."/>
            <person name="Yuan L."/>
            <person name="Cao M."/>
            <person name="McDermott J."/>
            <person name="Samudrala R."/>
            <person name="Wang J."/>
            <person name="Wong G.K.-S."/>
            <person name="Yang H."/>
        </authorList>
    </citation>
    <scope>NUCLEOTIDE SEQUENCE [LARGE SCALE GENOMIC DNA]</scope>
    <source>
        <strain>cv. 93-11</strain>
    </source>
</reference>
<keyword id="KW-0489">Methyltransferase</keyword>
<keyword id="KW-1185">Reference proteome</keyword>
<keyword id="KW-0949">S-adenosyl-L-methionine</keyword>
<keyword id="KW-0808">Transferase</keyword>
<name>ANM61_ORYSI</name>
<protein>
    <recommendedName>
        <fullName>Probable protein arginine N-methyltransferase 6.1</fullName>
        <ecNumber>2.1.1.-</ecNumber>
    </recommendedName>
</protein>